<feature type="chain" id="PRO_0000064582" description="Aliphatic amidase regulator">
    <location>
        <begin position="1"/>
        <end position="196"/>
    </location>
</feature>
<feature type="domain" description="ANTAR" evidence="1">
    <location>
        <begin position="129"/>
        <end position="190"/>
    </location>
</feature>
<feature type="sequence conflict" description="In Ref. 1; CAA32023." evidence="2" ref="1">
    <original>S</original>
    <variation>A</variation>
    <location>
        <position position="48"/>
    </location>
</feature>
<feature type="sequence conflict" description="In Ref. 1; CAA32023." evidence="2" ref="1">
    <original>R</original>
    <variation>G</variation>
    <location>
        <position position="64"/>
    </location>
</feature>
<feature type="sequence conflict" description="In Ref. 1; CAA32023." evidence="2" ref="1">
    <original>E</original>
    <variation>D</variation>
    <location>
        <position position="141"/>
    </location>
</feature>
<feature type="sequence conflict" description="In Ref. 1; CAA32023." evidence="2" ref="1">
    <original>A</original>
    <variation>V</variation>
    <location>
        <position position="154"/>
    </location>
</feature>
<feature type="sequence conflict" description="In Ref. 1; CAA32023." evidence="2" ref="1">
    <original>Y</original>
    <variation>H</variation>
    <location>
        <position position="170"/>
    </location>
</feature>
<feature type="helix" evidence="3">
    <location>
        <begin position="3"/>
        <end position="8"/>
    </location>
</feature>
<feature type="helix" evidence="3">
    <location>
        <begin position="9"/>
        <end position="12"/>
    </location>
</feature>
<feature type="strand" evidence="3">
    <location>
        <begin position="14"/>
        <end position="19"/>
    </location>
</feature>
<feature type="helix" evidence="3">
    <location>
        <begin position="23"/>
        <end position="35"/>
    </location>
</feature>
<feature type="strand" evidence="3">
    <location>
        <begin position="38"/>
        <end position="42"/>
    </location>
</feature>
<feature type="strand" evidence="3">
    <location>
        <begin position="54"/>
        <end position="59"/>
    </location>
</feature>
<feature type="helix" evidence="3">
    <location>
        <begin position="65"/>
        <end position="75"/>
    </location>
</feature>
<feature type="strand" evidence="3">
    <location>
        <begin position="81"/>
        <end position="86"/>
    </location>
</feature>
<feature type="helix" evidence="3">
    <location>
        <begin position="91"/>
        <end position="100"/>
    </location>
</feature>
<feature type="strand" evidence="3">
    <location>
        <begin position="103"/>
        <end position="109"/>
    </location>
</feature>
<feature type="helix" evidence="3">
    <location>
        <begin position="112"/>
        <end position="114"/>
    </location>
</feature>
<feature type="helix" evidence="3">
    <location>
        <begin position="115"/>
        <end position="160"/>
    </location>
</feature>
<feature type="helix" evidence="3">
    <location>
        <begin position="164"/>
        <end position="175"/>
    </location>
</feature>
<feature type="turn" evidence="3">
    <location>
        <begin position="176"/>
        <end position="179"/>
    </location>
</feature>
<feature type="helix" evidence="3">
    <location>
        <begin position="182"/>
        <end position="189"/>
    </location>
</feature>
<organism>
    <name type="scientific">Pseudomonas aeruginosa (strain ATCC 15692 / DSM 22644 / CIP 104116 / JCM 14847 / LMG 12228 / 1C / PRS 101 / PAO1)</name>
    <dbReference type="NCBI Taxonomy" id="208964"/>
    <lineage>
        <taxon>Bacteria</taxon>
        <taxon>Pseudomonadati</taxon>
        <taxon>Pseudomonadota</taxon>
        <taxon>Gammaproteobacteria</taxon>
        <taxon>Pseudomonadales</taxon>
        <taxon>Pseudomonadaceae</taxon>
        <taxon>Pseudomonas</taxon>
    </lineage>
</organism>
<sequence length="196" mass="21903">MSANSLLGSLRELQVLVLNPPGEVSDALVLQLIRIGCSVRQCWPPPESFDVPVDVVFTSIFQNRHHDEIAALLAAGTPRTTLVALVEYESPAVLSQIIELECHGVITQPLDAHRVLPVLVSARRISEEMAKLKQKTEQLQERIAGQARINQAKALLMQRHGWDEREAHQYLSREAMKRREPILKIAQELLGNEPSA</sequence>
<reference key="1">
    <citation type="journal article" date="1989" name="FEBS Lett.">
        <title>Nucleotide sequence of the aliphatic amidase regulator gene (amiR) of Pseudomonas aeruginosa.</title>
        <authorList>
            <person name="Lowe N."/>
            <person name="Rice P.M."/>
            <person name="Drew R.E."/>
        </authorList>
    </citation>
    <scope>NUCLEOTIDE SEQUENCE [GENOMIC DNA]</scope>
    <source>
        <strain>PAC433</strain>
    </source>
</reference>
<reference key="2">
    <citation type="journal article" date="2000" name="Nature">
        <title>Complete genome sequence of Pseudomonas aeruginosa PAO1, an opportunistic pathogen.</title>
        <authorList>
            <person name="Stover C.K."/>
            <person name="Pham X.-Q.T."/>
            <person name="Erwin A.L."/>
            <person name="Mizoguchi S.D."/>
            <person name="Warrener P."/>
            <person name="Hickey M.J."/>
            <person name="Brinkman F.S.L."/>
            <person name="Hufnagle W.O."/>
            <person name="Kowalik D.J."/>
            <person name="Lagrou M."/>
            <person name="Garber R.L."/>
            <person name="Goltry L."/>
            <person name="Tolentino E."/>
            <person name="Westbrock-Wadman S."/>
            <person name="Yuan Y."/>
            <person name="Brody L.L."/>
            <person name="Coulter S.N."/>
            <person name="Folger K.R."/>
            <person name="Kas A."/>
            <person name="Larbig K."/>
            <person name="Lim R.M."/>
            <person name="Smith K.A."/>
            <person name="Spencer D.H."/>
            <person name="Wong G.K.-S."/>
            <person name="Wu Z."/>
            <person name="Paulsen I.T."/>
            <person name="Reizer J."/>
            <person name="Saier M.H. Jr."/>
            <person name="Hancock R.E.W."/>
            <person name="Lory S."/>
            <person name="Olson M.V."/>
        </authorList>
    </citation>
    <scope>NUCLEOTIDE SEQUENCE [LARGE SCALE GENOMIC DNA]</scope>
    <source>
        <strain>ATCC 15692 / DSM 22644 / CIP 104116 / JCM 14847 / LMG 12228 / 1C / PRS 101 / PAO1</strain>
    </source>
</reference>
<reference key="3">
    <citation type="journal article" date="1995" name="J. Bacteriol.">
        <title>Transcriptional analysis of the amidase operon from Pseudomonas aeruginosa.</title>
        <authorList>
            <person name="Wilson S.A."/>
            <person name="Drew R.E."/>
        </authorList>
    </citation>
    <scope>CHARACTERIZATION</scope>
</reference>
<reference key="4">
    <citation type="journal article" date="1999" name="EMBO J.">
        <title>Crystal structure and induction mechanism of AmiC-AmiR: a ligand-regulated transcription antitermination complex.</title>
        <authorList>
            <person name="O'Hara B.P."/>
            <person name="Norman R.A."/>
            <person name="Wan P.T."/>
            <person name="Roe S.M."/>
            <person name="Barrett T.E."/>
            <person name="Drew R.E."/>
            <person name="Pearl L.H."/>
        </authorList>
    </citation>
    <scope>X-RAY CRYSTALLOGRAPHY (2.25 ANGSTROMS) OF COMPLEX WITH AMIC</scope>
    <source>
        <strain>PAC1</strain>
    </source>
</reference>
<dbReference type="EMBL" id="X13776">
    <property type="protein sequence ID" value="CAA32023.1"/>
    <property type="molecule type" value="Genomic_DNA"/>
</dbReference>
<dbReference type="EMBL" id="AE004091">
    <property type="protein sequence ID" value="AAG06751.1"/>
    <property type="molecule type" value="Genomic_DNA"/>
</dbReference>
<dbReference type="PIR" id="B83226">
    <property type="entry name" value="B83226"/>
</dbReference>
<dbReference type="PIR" id="S03884">
    <property type="entry name" value="S03884"/>
</dbReference>
<dbReference type="RefSeq" id="NP_252053.1">
    <property type="nucleotide sequence ID" value="NC_002516.2"/>
</dbReference>
<dbReference type="RefSeq" id="WP_003113131.1">
    <property type="nucleotide sequence ID" value="NZ_QZGE01000017.1"/>
</dbReference>
<dbReference type="PDB" id="1QO0">
    <property type="method" value="X-ray"/>
    <property type="resolution" value="2.25 A"/>
    <property type="chains" value="D/E=1-195"/>
</dbReference>
<dbReference type="PDBsum" id="1QO0"/>
<dbReference type="SMR" id="P10932"/>
<dbReference type="IntAct" id="P10932">
    <property type="interactions" value="1"/>
</dbReference>
<dbReference type="STRING" id="208964.PA3363"/>
<dbReference type="PaxDb" id="208964-PA3363"/>
<dbReference type="DNASU" id="880573"/>
<dbReference type="GeneID" id="880573"/>
<dbReference type="KEGG" id="pae:PA3363"/>
<dbReference type="PATRIC" id="fig|208964.12.peg.3522"/>
<dbReference type="PseudoCAP" id="PA3363"/>
<dbReference type="HOGENOM" id="CLU_108803_1_0_6"/>
<dbReference type="InParanoid" id="P10932"/>
<dbReference type="OrthoDB" id="8720242at2"/>
<dbReference type="PhylomeDB" id="P10932"/>
<dbReference type="BioCyc" id="PAER208964:G1FZ6-3427-MONOMER"/>
<dbReference type="EvolutionaryTrace" id="P10932"/>
<dbReference type="Proteomes" id="UP000002438">
    <property type="component" value="Chromosome"/>
</dbReference>
<dbReference type="GO" id="GO:0003723">
    <property type="term" value="F:RNA binding"/>
    <property type="evidence" value="ECO:0007669"/>
    <property type="project" value="InterPro"/>
</dbReference>
<dbReference type="GO" id="GO:0015976">
    <property type="term" value="P:carbon utilization"/>
    <property type="evidence" value="ECO:0000314"/>
    <property type="project" value="PseudoCAP"/>
</dbReference>
<dbReference type="GO" id="GO:0044248">
    <property type="term" value="P:cellular catabolic process"/>
    <property type="evidence" value="ECO:0000314"/>
    <property type="project" value="PseudoCAP"/>
</dbReference>
<dbReference type="GO" id="GO:0034251">
    <property type="term" value="P:regulation of amide catabolic process"/>
    <property type="evidence" value="ECO:0000314"/>
    <property type="project" value="PseudoCAP"/>
</dbReference>
<dbReference type="GO" id="GO:0031564">
    <property type="term" value="P:transcription antitermination"/>
    <property type="evidence" value="ECO:0000314"/>
    <property type="project" value="PseudoCAP"/>
</dbReference>
<dbReference type="Gene3D" id="3.40.50.2300">
    <property type="match status" value="1"/>
</dbReference>
<dbReference type="Gene3D" id="1.10.10.10">
    <property type="entry name" value="Winged helix-like DNA-binding domain superfamily/Winged helix DNA-binding domain"/>
    <property type="match status" value="1"/>
</dbReference>
<dbReference type="InterPro" id="IPR049021">
    <property type="entry name" value="AmiR_N"/>
</dbReference>
<dbReference type="InterPro" id="IPR005561">
    <property type="entry name" value="ANTAR"/>
</dbReference>
<dbReference type="InterPro" id="IPR011006">
    <property type="entry name" value="CheY-like_superfamily"/>
</dbReference>
<dbReference type="InterPro" id="IPR008327">
    <property type="entry name" value="Sig_transdc_resp-reg_antiterm"/>
</dbReference>
<dbReference type="InterPro" id="IPR036388">
    <property type="entry name" value="WH-like_DNA-bd_sf"/>
</dbReference>
<dbReference type="Pfam" id="PF21332">
    <property type="entry name" value="AmiR_N"/>
    <property type="match status" value="1"/>
</dbReference>
<dbReference type="Pfam" id="PF03861">
    <property type="entry name" value="ANTAR"/>
    <property type="match status" value="1"/>
</dbReference>
<dbReference type="PIRSF" id="PIRSF036382">
    <property type="entry name" value="RR_antiterm"/>
    <property type="match status" value="1"/>
</dbReference>
<dbReference type="SMART" id="SM01012">
    <property type="entry name" value="ANTAR"/>
    <property type="match status" value="1"/>
</dbReference>
<dbReference type="SUPFAM" id="SSF52172">
    <property type="entry name" value="CheY-like"/>
    <property type="match status" value="1"/>
</dbReference>
<dbReference type="PROSITE" id="PS50921">
    <property type="entry name" value="ANTAR"/>
    <property type="match status" value="1"/>
</dbReference>
<gene>
    <name type="primary">amiR</name>
    <name type="ordered locus">PA3363</name>
</gene>
<keyword id="KW-0002">3D-structure</keyword>
<keyword id="KW-1185">Reference proteome</keyword>
<keyword id="KW-0804">Transcription</keyword>
<keyword id="KW-0889">Transcription antitermination</keyword>
<keyword id="KW-0805">Transcription regulation</keyword>
<name>AMIR_PSEAE</name>
<evidence type="ECO:0000255" key="1">
    <source>
        <dbReference type="PROSITE-ProRule" id="PRU00308"/>
    </source>
</evidence>
<evidence type="ECO:0000305" key="2"/>
<evidence type="ECO:0007829" key="3">
    <source>
        <dbReference type="PDB" id="1QO0"/>
    </source>
</evidence>
<protein>
    <recommendedName>
        <fullName>Aliphatic amidase regulator</fullName>
    </recommendedName>
</protein>
<comment type="function">
    <text>Positive controlling element of AmiE, the gene for aliphatic amidase. Acts as a transcriptional antitermination factor. It is thought to allow RNA polymerase read through a rho-independent transcription terminator between the AmiE promoter and gene.</text>
</comment>
<comment type="subunit">
    <text>Forms a complex with AmiC.</text>
</comment>
<accession>P10932</accession>
<proteinExistence type="evidence at protein level"/>